<comment type="function">
    <text evidence="1">Binds to DNA and alters its conformation. May be involved in regulation of gene expression, nucleoid organization and DNA protection.</text>
</comment>
<comment type="subunit">
    <text evidence="1">Homodimer.</text>
</comment>
<comment type="subcellular location">
    <subcellularLocation>
        <location evidence="1">Cytoplasm</location>
        <location evidence="1">Nucleoid</location>
    </subcellularLocation>
</comment>
<comment type="similarity">
    <text evidence="1">Belongs to the YbaB/EbfC family.</text>
</comment>
<protein>
    <recommendedName>
        <fullName evidence="1">Nucleoid-associated protein CTLon_0586</fullName>
    </recommendedName>
</protein>
<gene>
    <name type="ordered locus">CTLon_0586</name>
</gene>
<organism>
    <name type="scientific">Chlamydia trachomatis serovar L2b (strain UCH-1/proctitis)</name>
    <dbReference type="NCBI Taxonomy" id="471473"/>
    <lineage>
        <taxon>Bacteria</taxon>
        <taxon>Pseudomonadati</taxon>
        <taxon>Chlamydiota</taxon>
        <taxon>Chlamydiia</taxon>
        <taxon>Chlamydiales</taxon>
        <taxon>Chlamydiaceae</taxon>
        <taxon>Chlamydia/Chlamydophila group</taxon>
        <taxon>Chlamydia</taxon>
    </lineage>
</organism>
<name>Y586_CHLTB</name>
<accession>B0BBW8</accession>
<sequence>MGSGYAKKKKEAKLMERQFMEMEASLEQKRFSGEAGNGLVSVTINGKCDLVDVRIKPDCLDPEDPEVVADLFRAAFKAAKAALDSEMSAMQMGMPF</sequence>
<proteinExistence type="inferred from homology"/>
<evidence type="ECO:0000255" key="1">
    <source>
        <dbReference type="HAMAP-Rule" id="MF_00274"/>
    </source>
</evidence>
<dbReference type="EMBL" id="AM884177">
    <property type="protein sequence ID" value="CAP06983.1"/>
    <property type="molecule type" value="Genomic_DNA"/>
</dbReference>
<dbReference type="RefSeq" id="WP_009871685.1">
    <property type="nucleotide sequence ID" value="NC_010280.2"/>
</dbReference>
<dbReference type="SMR" id="B0BBW8"/>
<dbReference type="KEGG" id="ctl:CTLon_0586"/>
<dbReference type="HOGENOM" id="CLU_140930_2_2_0"/>
<dbReference type="Proteomes" id="UP001154401">
    <property type="component" value="Chromosome"/>
</dbReference>
<dbReference type="GO" id="GO:0043590">
    <property type="term" value="C:bacterial nucleoid"/>
    <property type="evidence" value="ECO:0007669"/>
    <property type="project" value="UniProtKB-UniRule"/>
</dbReference>
<dbReference type="GO" id="GO:0005829">
    <property type="term" value="C:cytosol"/>
    <property type="evidence" value="ECO:0007669"/>
    <property type="project" value="TreeGrafter"/>
</dbReference>
<dbReference type="GO" id="GO:0003677">
    <property type="term" value="F:DNA binding"/>
    <property type="evidence" value="ECO:0007669"/>
    <property type="project" value="UniProtKB-UniRule"/>
</dbReference>
<dbReference type="FunFam" id="3.30.1310.10:FF:000009">
    <property type="entry name" value="Nucleoid-associated protein TC_0612"/>
    <property type="match status" value="1"/>
</dbReference>
<dbReference type="Gene3D" id="3.30.1310.10">
    <property type="entry name" value="Nucleoid-associated protein YbaB-like domain"/>
    <property type="match status" value="1"/>
</dbReference>
<dbReference type="HAMAP" id="MF_00274">
    <property type="entry name" value="DNA_YbaB_EbfC"/>
    <property type="match status" value="1"/>
</dbReference>
<dbReference type="InterPro" id="IPR036894">
    <property type="entry name" value="YbaB-like_sf"/>
</dbReference>
<dbReference type="InterPro" id="IPR004401">
    <property type="entry name" value="YbaB/EbfC"/>
</dbReference>
<dbReference type="NCBIfam" id="TIGR00103">
    <property type="entry name" value="DNA_YbaB_EbfC"/>
    <property type="match status" value="1"/>
</dbReference>
<dbReference type="PANTHER" id="PTHR33449">
    <property type="entry name" value="NUCLEOID-ASSOCIATED PROTEIN YBAB"/>
    <property type="match status" value="1"/>
</dbReference>
<dbReference type="PANTHER" id="PTHR33449:SF1">
    <property type="entry name" value="NUCLEOID-ASSOCIATED PROTEIN YBAB"/>
    <property type="match status" value="1"/>
</dbReference>
<dbReference type="Pfam" id="PF02575">
    <property type="entry name" value="YbaB_DNA_bd"/>
    <property type="match status" value="1"/>
</dbReference>
<dbReference type="PIRSF" id="PIRSF004555">
    <property type="entry name" value="UCP004555"/>
    <property type="match status" value="1"/>
</dbReference>
<dbReference type="SUPFAM" id="SSF82607">
    <property type="entry name" value="YbaB-like"/>
    <property type="match status" value="1"/>
</dbReference>
<reference key="1">
    <citation type="journal article" date="2008" name="Genome Res.">
        <title>Chlamydia trachomatis: genome sequence analysis of lymphogranuloma venereum isolates.</title>
        <authorList>
            <person name="Thomson N.R."/>
            <person name="Holden M.T.G."/>
            <person name="Carder C."/>
            <person name="Lennard N."/>
            <person name="Lockey S.J."/>
            <person name="Marsh P."/>
            <person name="Skipp P."/>
            <person name="O'Connor C.D."/>
            <person name="Goodhead I."/>
            <person name="Norbertzcak H."/>
            <person name="Harris B."/>
            <person name="Ormond D."/>
            <person name="Rance R."/>
            <person name="Quail M.A."/>
            <person name="Parkhill J."/>
            <person name="Stephens R.S."/>
            <person name="Clarke I.N."/>
        </authorList>
    </citation>
    <scope>NUCLEOTIDE SEQUENCE [LARGE SCALE GENOMIC DNA]</scope>
    <source>
        <strain>UCH-1/proctitis</strain>
    </source>
</reference>
<keyword id="KW-0963">Cytoplasm</keyword>
<keyword id="KW-0238">DNA-binding</keyword>
<feature type="chain" id="PRO_1000114600" description="Nucleoid-associated protein CTLon_0586">
    <location>
        <begin position="1"/>
        <end position="96"/>
    </location>
</feature>